<keyword id="KW-0963">Cytoplasm</keyword>
<keyword id="KW-0238">DNA-binding</keyword>
<keyword id="KW-1185">Reference proteome</keyword>
<keyword id="KW-0677">Repeat</keyword>
<keyword id="KW-0804">Transcription</keyword>
<keyword id="KW-0805">Transcription regulation</keyword>
<accession>Q8Y5L6</accession>
<comment type="subunit">
    <text evidence="1">Forms oligomers.</text>
</comment>
<comment type="subcellular location">
    <subcellularLocation>
        <location evidence="1">Cytoplasm</location>
        <location evidence="1">Nucleoid</location>
    </subcellularLocation>
</comment>
<comment type="similarity">
    <text evidence="1">Belongs to the MraZ family.</text>
</comment>
<evidence type="ECO:0000255" key="1">
    <source>
        <dbReference type="HAMAP-Rule" id="MF_01008"/>
    </source>
</evidence>
<evidence type="ECO:0000255" key="2">
    <source>
        <dbReference type="PROSITE-ProRule" id="PRU01076"/>
    </source>
</evidence>
<organism>
    <name type="scientific">Listeria monocytogenes serovar 1/2a (strain ATCC BAA-679 / EGD-e)</name>
    <dbReference type="NCBI Taxonomy" id="169963"/>
    <lineage>
        <taxon>Bacteria</taxon>
        <taxon>Bacillati</taxon>
        <taxon>Bacillota</taxon>
        <taxon>Bacilli</taxon>
        <taxon>Bacillales</taxon>
        <taxon>Listeriaceae</taxon>
        <taxon>Listeria</taxon>
    </lineage>
</organism>
<name>MRAZ_LISMO</name>
<feature type="chain" id="PRO_0000108497" description="Transcriptional regulator MraZ">
    <location>
        <begin position="1"/>
        <end position="143"/>
    </location>
</feature>
<feature type="domain" description="SpoVT-AbrB 1" evidence="2">
    <location>
        <begin position="5"/>
        <end position="47"/>
    </location>
</feature>
<feature type="domain" description="SpoVT-AbrB 2" evidence="2">
    <location>
        <begin position="76"/>
        <end position="119"/>
    </location>
</feature>
<proteinExistence type="inferred from homology"/>
<dbReference type="EMBL" id="AL591982">
    <property type="protein sequence ID" value="CAD00120.1"/>
    <property type="molecule type" value="Genomic_DNA"/>
</dbReference>
<dbReference type="PIR" id="AB1330">
    <property type="entry name" value="AB1330"/>
</dbReference>
<dbReference type="RefSeq" id="NP_465566.1">
    <property type="nucleotide sequence ID" value="NC_003210.1"/>
</dbReference>
<dbReference type="RefSeq" id="WP_003723756.1">
    <property type="nucleotide sequence ID" value="NZ_CP149495.1"/>
</dbReference>
<dbReference type="SMR" id="Q8Y5L6"/>
<dbReference type="STRING" id="169963.gene:17594727"/>
<dbReference type="PaxDb" id="169963-lmo2042"/>
<dbReference type="EnsemblBacteria" id="CAD00120">
    <property type="protein sequence ID" value="CAD00120"/>
    <property type="gene ID" value="CAD00120"/>
</dbReference>
<dbReference type="GeneID" id="93239939"/>
<dbReference type="GeneID" id="985262"/>
<dbReference type="KEGG" id="lmo:lmo2042"/>
<dbReference type="PATRIC" id="fig|169963.11.peg.2090"/>
<dbReference type="eggNOG" id="COG2001">
    <property type="taxonomic scope" value="Bacteria"/>
</dbReference>
<dbReference type="HOGENOM" id="CLU_107907_0_5_9"/>
<dbReference type="OrthoDB" id="9807753at2"/>
<dbReference type="PhylomeDB" id="Q8Y5L6"/>
<dbReference type="BioCyc" id="LMON169963:LMO2042-MONOMER"/>
<dbReference type="Proteomes" id="UP000000817">
    <property type="component" value="Chromosome"/>
</dbReference>
<dbReference type="GO" id="GO:0005737">
    <property type="term" value="C:cytoplasm"/>
    <property type="evidence" value="ECO:0007669"/>
    <property type="project" value="UniProtKB-UniRule"/>
</dbReference>
<dbReference type="GO" id="GO:0009295">
    <property type="term" value="C:nucleoid"/>
    <property type="evidence" value="ECO:0007669"/>
    <property type="project" value="UniProtKB-SubCell"/>
</dbReference>
<dbReference type="GO" id="GO:0003700">
    <property type="term" value="F:DNA-binding transcription factor activity"/>
    <property type="evidence" value="ECO:0000318"/>
    <property type="project" value="GO_Central"/>
</dbReference>
<dbReference type="GO" id="GO:0000976">
    <property type="term" value="F:transcription cis-regulatory region binding"/>
    <property type="evidence" value="ECO:0000318"/>
    <property type="project" value="GO_Central"/>
</dbReference>
<dbReference type="GO" id="GO:2000143">
    <property type="term" value="P:negative regulation of DNA-templated transcription initiation"/>
    <property type="evidence" value="ECO:0000318"/>
    <property type="project" value="GO_Central"/>
</dbReference>
<dbReference type="CDD" id="cd16321">
    <property type="entry name" value="MraZ_C"/>
    <property type="match status" value="1"/>
</dbReference>
<dbReference type="CDD" id="cd16320">
    <property type="entry name" value="MraZ_N"/>
    <property type="match status" value="1"/>
</dbReference>
<dbReference type="FunFam" id="3.40.1550.20:FF:000002">
    <property type="entry name" value="Transcriptional regulator MraZ"/>
    <property type="match status" value="1"/>
</dbReference>
<dbReference type="Gene3D" id="3.40.1550.20">
    <property type="entry name" value="Transcriptional regulator MraZ domain"/>
    <property type="match status" value="1"/>
</dbReference>
<dbReference type="HAMAP" id="MF_01008">
    <property type="entry name" value="MraZ"/>
    <property type="match status" value="1"/>
</dbReference>
<dbReference type="InterPro" id="IPR003444">
    <property type="entry name" value="MraZ"/>
</dbReference>
<dbReference type="InterPro" id="IPR035644">
    <property type="entry name" value="MraZ_C"/>
</dbReference>
<dbReference type="InterPro" id="IPR020603">
    <property type="entry name" value="MraZ_dom"/>
</dbReference>
<dbReference type="InterPro" id="IPR035642">
    <property type="entry name" value="MraZ_N"/>
</dbReference>
<dbReference type="InterPro" id="IPR038619">
    <property type="entry name" value="MraZ_sf"/>
</dbReference>
<dbReference type="InterPro" id="IPR007159">
    <property type="entry name" value="SpoVT-AbrB_dom"/>
</dbReference>
<dbReference type="InterPro" id="IPR037914">
    <property type="entry name" value="SpoVT-AbrB_sf"/>
</dbReference>
<dbReference type="NCBIfam" id="TIGR00242">
    <property type="entry name" value="division/cell wall cluster transcriptional repressor MraZ"/>
    <property type="match status" value="1"/>
</dbReference>
<dbReference type="PANTHER" id="PTHR34701">
    <property type="entry name" value="TRANSCRIPTIONAL REGULATOR MRAZ"/>
    <property type="match status" value="1"/>
</dbReference>
<dbReference type="PANTHER" id="PTHR34701:SF1">
    <property type="entry name" value="TRANSCRIPTIONAL REGULATOR MRAZ"/>
    <property type="match status" value="1"/>
</dbReference>
<dbReference type="Pfam" id="PF02381">
    <property type="entry name" value="MraZ"/>
    <property type="match status" value="2"/>
</dbReference>
<dbReference type="SUPFAM" id="SSF89447">
    <property type="entry name" value="AbrB/MazE/MraZ-like"/>
    <property type="match status" value="1"/>
</dbReference>
<dbReference type="PROSITE" id="PS51740">
    <property type="entry name" value="SPOVT_ABRB"/>
    <property type="match status" value="2"/>
</dbReference>
<reference key="1">
    <citation type="journal article" date="2001" name="Science">
        <title>Comparative genomics of Listeria species.</title>
        <authorList>
            <person name="Glaser P."/>
            <person name="Frangeul L."/>
            <person name="Buchrieser C."/>
            <person name="Rusniok C."/>
            <person name="Amend A."/>
            <person name="Baquero F."/>
            <person name="Berche P."/>
            <person name="Bloecker H."/>
            <person name="Brandt P."/>
            <person name="Chakraborty T."/>
            <person name="Charbit A."/>
            <person name="Chetouani F."/>
            <person name="Couve E."/>
            <person name="de Daruvar A."/>
            <person name="Dehoux P."/>
            <person name="Domann E."/>
            <person name="Dominguez-Bernal G."/>
            <person name="Duchaud E."/>
            <person name="Durant L."/>
            <person name="Dussurget O."/>
            <person name="Entian K.-D."/>
            <person name="Fsihi H."/>
            <person name="Garcia-del Portillo F."/>
            <person name="Garrido P."/>
            <person name="Gautier L."/>
            <person name="Goebel W."/>
            <person name="Gomez-Lopez N."/>
            <person name="Hain T."/>
            <person name="Hauf J."/>
            <person name="Jackson D."/>
            <person name="Jones L.-M."/>
            <person name="Kaerst U."/>
            <person name="Kreft J."/>
            <person name="Kuhn M."/>
            <person name="Kunst F."/>
            <person name="Kurapkat G."/>
            <person name="Madueno E."/>
            <person name="Maitournam A."/>
            <person name="Mata Vicente J."/>
            <person name="Ng E."/>
            <person name="Nedjari H."/>
            <person name="Nordsiek G."/>
            <person name="Novella S."/>
            <person name="de Pablos B."/>
            <person name="Perez-Diaz J.-C."/>
            <person name="Purcell R."/>
            <person name="Remmel B."/>
            <person name="Rose M."/>
            <person name="Schlueter T."/>
            <person name="Simoes N."/>
            <person name="Tierrez A."/>
            <person name="Vazquez-Boland J.-A."/>
            <person name="Voss H."/>
            <person name="Wehland J."/>
            <person name="Cossart P."/>
        </authorList>
    </citation>
    <scope>NUCLEOTIDE SEQUENCE [LARGE SCALE GENOMIC DNA]</scope>
    <source>
        <strain>ATCC BAA-679 / EGD-e</strain>
    </source>
</reference>
<sequence length="143" mass="16608">MFMGEYQHNIDIKGRLIVPAKFRELLGDNFVITRGLDKCLFAYPQEEWKKLEEKLQTLPLTKKDARSFTRFFFSGASECELDKQGRINIPSNLLQYADLEKETVIIGVSSRIEIWSKSEWDDVFNEAEESFADLAENMIGFDI</sequence>
<gene>
    <name evidence="1" type="primary">mraZ</name>
    <name type="ordered locus">lmo2042</name>
</gene>
<protein>
    <recommendedName>
        <fullName>Transcriptional regulator MraZ</fullName>
    </recommendedName>
</protein>